<evidence type="ECO:0000255" key="1">
    <source>
        <dbReference type="HAMAP-Rule" id="MF_00015"/>
    </source>
</evidence>
<proteinExistence type="inferred from homology"/>
<keyword id="KW-0068">Autocatalytic cleavage</keyword>
<keyword id="KW-0227">DNA damage</keyword>
<keyword id="KW-0234">DNA repair</keyword>
<keyword id="KW-0235">DNA replication</keyword>
<keyword id="KW-0238">DNA-binding</keyword>
<keyword id="KW-0378">Hydrolase</keyword>
<keyword id="KW-0678">Repressor</keyword>
<keyword id="KW-0742">SOS response</keyword>
<keyword id="KW-0804">Transcription</keyword>
<keyword id="KW-0805">Transcription regulation</keyword>
<accession>P65819</accession>
<accession>Q99UD7</accession>
<feature type="chain" id="PRO_0000170088" description="LexA repressor">
    <location>
        <begin position="1"/>
        <end position="207"/>
    </location>
</feature>
<feature type="DNA-binding region" description="H-T-H motif" evidence="1">
    <location>
        <begin position="28"/>
        <end position="48"/>
    </location>
</feature>
<feature type="active site" description="For autocatalytic cleavage activity" evidence="1">
    <location>
        <position position="130"/>
    </location>
</feature>
<feature type="active site" description="For autocatalytic cleavage activity" evidence="1">
    <location>
        <position position="168"/>
    </location>
</feature>
<feature type="site" description="Cleavage; by autolysis" evidence="1">
    <location>
        <begin position="93"/>
        <end position="94"/>
    </location>
</feature>
<organism>
    <name type="scientific">Staphylococcus aureus (strain Mu50 / ATCC 700699)</name>
    <dbReference type="NCBI Taxonomy" id="158878"/>
    <lineage>
        <taxon>Bacteria</taxon>
        <taxon>Bacillati</taxon>
        <taxon>Bacillota</taxon>
        <taxon>Bacilli</taxon>
        <taxon>Bacillales</taxon>
        <taxon>Staphylococcaceae</taxon>
        <taxon>Staphylococcus</taxon>
    </lineage>
</organism>
<comment type="function">
    <text evidence="1">Represses a number of genes involved in the response to DNA damage (SOS response), including recA and lexA. In the presence of single-stranded DNA, RecA interacts with LexA causing an autocatalytic cleavage which disrupts the DNA-binding part of LexA, leading to derepression of the SOS regulon and eventually DNA repair.</text>
</comment>
<comment type="catalytic activity">
    <reaction evidence="1">
        <text>Hydrolysis of Ala-|-Gly bond in repressor LexA.</text>
        <dbReference type="EC" id="3.4.21.88"/>
    </reaction>
</comment>
<comment type="subunit">
    <text evidence="1">Homodimer.</text>
</comment>
<comment type="similarity">
    <text evidence="1">Belongs to the peptidase S24 family.</text>
</comment>
<name>LEXA_STAAM</name>
<reference key="1">
    <citation type="journal article" date="2001" name="Lancet">
        <title>Whole genome sequencing of meticillin-resistant Staphylococcus aureus.</title>
        <authorList>
            <person name="Kuroda M."/>
            <person name="Ohta T."/>
            <person name="Uchiyama I."/>
            <person name="Baba T."/>
            <person name="Yuzawa H."/>
            <person name="Kobayashi I."/>
            <person name="Cui L."/>
            <person name="Oguchi A."/>
            <person name="Aoki K."/>
            <person name="Nagai Y."/>
            <person name="Lian J.-Q."/>
            <person name="Ito T."/>
            <person name="Kanamori M."/>
            <person name="Matsumaru H."/>
            <person name="Maruyama A."/>
            <person name="Murakami H."/>
            <person name="Hosoyama A."/>
            <person name="Mizutani-Ui Y."/>
            <person name="Takahashi N.K."/>
            <person name="Sawano T."/>
            <person name="Inoue R."/>
            <person name="Kaito C."/>
            <person name="Sekimizu K."/>
            <person name="Hirakawa H."/>
            <person name="Kuhara S."/>
            <person name="Goto S."/>
            <person name="Yabuzaki J."/>
            <person name="Kanehisa M."/>
            <person name="Yamashita A."/>
            <person name="Oshima K."/>
            <person name="Furuya K."/>
            <person name="Yoshino C."/>
            <person name="Shiba T."/>
            <person name="Hattori M."/>
            <person name="Ogasawara N."/>
            <person name="Hayashi H."/>
            <person name="Hiramatsu K."/>
        </authorList>
    </citation>
    <scope>NUCLEOTIDE SEQUENCE [LARGE SCALE GENOMIC DNA]</scope>
    <source>
        <strain>Mu50 / ATCC 700699</strain>
    </source>
</reference>
<protein>
    <recommendedName>
        <fullName evidence="1">LexA repressor</fullName>
        <ecNumber evidence="1">3.4.21.88</ecNumber>
    </recommendedName>
</protein>
<sequence>MRELTKRQSEIYNYIKQVVQMKGYPPSVREIGEAVGLASSSTVHGHLSRLEEKGYIRRDPTKPRAIEIVSDQTNDNINMEETIHVPVIGKVTAGVPITAVENIEEYFPLPEHLTSTHNSDIFILNVVGDSMIEAGILDGDKVIVRSQTIAENGDIIVAMTEEDEATVKRFYKEKNRYRLQPENSTMEPIYLDNVAVIGKVIGLYREM</sequence>
<gene>
    <name evidence="1" type="primary">lexA</name>
    <name type="ordered locus">SAV1339</name>
</gene>
<dbReference type="EC" id="3.4.21.88" evidence="1"/>
<dbReference type="EMBL" id="BA000017">
    <property type="protein sequence ID" value="BAB57501.1"/>
    <property type="molecule type" value="Genomic_DNA"/>
</dbReference>
<dbReference type="RefSeq" id="WP_001208755.1">
    <property type="nucleotide sequence ID" value="NC_002758.2"/>
</dbReference>
<dbReference type="SMR" id="P65819"/>
<dbReference type="MEROPS" id="S24.001"/>
<dbReference type="KEGG" id="sav:SAV1339"/>
<dbReference type="HOGENOM" id="CLU_066192_45_1_9"/>
<dbReference type="PhylomeDB" id="P65819"/>
<dbReference type="Proteomes" id="UP000002481">
    <property type="component" value="Chromosome"/>
</dbReference>
<dbReference type="GO" id="GO:0003677">
    <property type="term" value="F:DNA binding"/>
    <property type="evidence" value="ECO:0007669"/>
    <property type="project" value="UniProtKB-UniRule"/>
</dbReference>
<dbReference type="GO" id="GO:0004252">
    <property type="term" value="F:serine-type endopeptidase activity"/>
    <property type="evidence" value="ECO:0007669"/>
    <property type="project" value="UniProtKB-UniRule"/>
</dbReference>
<dbReference type="GO" id="GO:0006281">
    <property type="term" value="P:DNA repair"/>
    <property type="evidence" value="ECO:0007669"/>
    <property type="project" value="UniProtKB-UniRule"/>
</dbReference>
<dbReference type="GO" id="GO:0006260">
    <property type="term" value="P:DNA replication"/>
    <property type="evidence" value="ECO:0007669"/>
    <property type="project" value="UniProtKB-UniRule"/>
</dbReference>
<dbReference type="GO" id="GO:0045892">
    <property type="term" value="P:negative regulation of DNA-templated transcription"/>
    <property type="evidence" value="ECO:0007669"/>
    <property type="project" value="UniProtKB-UniRule"/>
</dbReference>
<dbReference type="GO" id="GO:0006508">
    <property type="term" value="P:proteolysis"/>
    <property type="evidence" value="ECO:0007669"/>
    <property type="project" value="InterPro"/>
</dbReference>
<dbReference type="GO" id="GO:0009432">
    <property type="term" value="P:SOS response"/>
    <property type="evidence" value="ECO:0007669"/>
    <property type="project" value="UniProtKB-UniRule"/>
</dbReference>
<dbReference type="CDD" id="cd00090">
    <property type="entry name" value="HTH_ARSR"/>
    <property type="match status" value="1"/>
</dbReference>
<dbReference type="CDD" id="cd06529">
    <property type="entry name" value="S24_LexA-like"/>
    <property type="match status" value="1"/>
</dbReference>
<dbReference type="FunFam" id="1.10.10.10:FF:000009">
    <property type="entry name" value="LexA repressor"/>
    <property type="match status" value="1"/>
</dbReference>
<dbReference type="FunFam" id="2.10.109.10:FF:000001">
    <property type="entry name" value="LexA repressor"/>
    <property type="match status" value="1"/>
</dbReference>
<dbReference type="Gene3D" id="2.10.109.10">
    <property type="entry name" value="Umud Fragment, subunit A"/>
    <property type="match status" value="1"/>
</dbReference>
<dbReference type="Gene3D" id="1.10.10.10">
    <property type="entry name" value="Winged helix-like DNA-binding domain superfamily/Winged helix DNA-binding domain"/>
    <property type="match status" value="1"/>
</dbReference>
<dbReference type="HAMAP" id="MF_00015">
    <property type="entry name" value="LexA"/>
    <property type="match status" value="1"/>
</dbReference>
<dbReference type="InterPro" id="IPR011991">
    <property type="entry name" value="ArsR-like_HTH"/>
</dbReference>
<dbReference type="InterPro" id="IPR006200">
    <property type="entry name" value="LexA"/>
</dbReference>
<dbReference type="InterPro" id="IPR039418">
    <property type="entry name" value="LexA-like"/>
</dbReference>
<dbReference type="InterPro" id="IPR036286">
    <property type="entry name" value="LexA/Signal_pep-like_sf"/>
</dbReference>
<dbReference type="InterPro" id="IPR006199">
    <property type="entry name" value="LexA_DNA-bd_dom"/>
</dbReference>
<dbReference type="InterPro" id="IPR050077">
    <property type="entry name" value="LexA_repressor"/>
</dbReference>
<dbReference type="InterPro" id="IPR006197">
    <property type="entry name" value="Peptidase_S24_LexA"/>
</dbReference>
<dbReference type="InterPro" id="IPR015927">
    <property type="entry name" value="Peptidase_S24_S26A/B/C"/>
</dbReference>
<dbReference type="InterPro" id="IPR036388">
    <property type="entry name" value="WH-like_DNA-bd_sf"/>
</dbReference>
<dbReference type="InterPro" id="IPR036390">
    <property type="entry name" value="WH_DNA-bd_sf"/>
</dbReference>
<dbReference type="NCBIfam" id="TIGR00498">
    <property type="entry name" value="lexA"/>
    <property type="match status" value="1"/>
</dbReference>
<dbReference type="PANTHER" id="PTHR33516">
    <property type="entry name" value="LEXA REPRESSOR"/>
    <property type="match status" value="1"/>
</dbReference>
<dbReference type="PANTHER" id="PTHR33516:SF2">
    <property type="entry name" value="LEXA REPRESSOR-RELATED"/>
    <property type="match status" value="1"/>
</dbReference>
<dbReference type="Pfam" id="PF01726">
    <property type="entry name" value="LexA_DNA_bind"/>
    <property type="match status" value="1"/>
</dbReference>
<dbReference type="Pfam" id="PF00717">
    <property type="entry name" value="Peptidase_S24"/>
    <property type="match status" value="1"/>
</dbReference>
<dbReference type="PRINTS" id="PR00726">
    <property type="entry name" value="LEXASERPTASE"/>
</dbReference>
<dbReference type="SUPFAM" id="SSF51306">
    <property type="entry name" value="LexA/Signal peptidase"/>
    <property type="match status" value="1"/>
</dbReference>
<dbReference type="SUPFAM" id="SSF46785">
    <property type="entry name" value="Winged helix' DNA-binding domain"/>
    <property type="match status" value="1"/>
</dbReference>